<gene>
    <name type="primary">BETA-OHASE 1</name>
    <name type="synonym">B1</name>
    <name type="synonym">CHY1</name>
    <name type="ordered locus">At4g25700</name>
    <name type="ORF">L73G19.80</name>
</gene>
<organism>
    <name type="scientific">Arabidopsis thaliana</name>
    <name type="common">Mouse-ear cress</name>
    <dbReference type="NCBI Taxonomy" id="3702"/>
    <lineage>
        <taxon>Eukaryota</taxon>
        <taxon>Viridiplantae</taxon>
        <taxon>Streptophyta</taxon>
        <taxon>Embryophyta</taxon>
        <taxon>Tracheophyta</taxon>
        <taxon>Spermatophyta</taxon>
        <taxon>Magnoliopsida</taxon>
        <taxon>eudicotyledons</taxon>
        <taxon>Gunneridae</taxon>
        <taxon>Pentapetalae</taxon>
        <taxon>rosids</taxon>
        <taxon>malvids</taxon>
        <taxon>Brassicales</taxon>
        <taxon>Brassicaceae</taxon>
        <taxon>Camelineae</taxon>
        <taxon>Arabidopsis</taxon>
    </lineage>
</organism>
<feature type="transit peptide" description="Chloroplast" evidence="1">
    <location>
        <begin position="1"/>
        <end position="51"/>
    </location>
</feature>
<feature type="chain" id="PRO_0000412804" description="Beta-carotene 3-hydroxylase 1, chloroplastic">
    <location>
        <begin position="52"/>
        <end position="310"/>
    </location>
</feature>
<feature type="transmembrane region" description="Helical" evidence="1">
    <location>
        <begin position="98"/>
        <end position="118"/>
    </location>
</feature>
<feature type="transmembrane region" description="Helical" evidence="1">
    <location>
        <begin position="132"/>
        <end position="152"/>
    </location>
</feature>
<feature type="transmembrane region" description="Helical" evidence="1">
    <location>
        <begin position="183"/>
        <end position="203"/>
    </location>
</feature>
<feature type="transmembrane region" description="Helical" evidence="1">
    <location>
        <begin position="208"/>
        <end position="228"/>
    </location>
</feature>
<feature type="domain" description="Fatty acid hydroxylase" evidence="1">
    <location>
        <begin position="145"/>
        <end position="272"/>
    </location>
</feature>
<feature type="short sequence motif" description="Histidine box-1">
    <location>
        <begin position="157"/>
        <end position="162"/>
    </location>
</feature>
<feature type="short sequence motif" description="Histidine box-2">
    <location>
        <begin position="169"/>
        <end position="173"/>
    </location>
</feature>
<feature type="short sequence motif" description="Histidine box-3">
    <location>
        <begin position="230"/>
        <end position="235"/>
    </location>
</feature>
<feature type="short sequence motif" description="Histidine box-4">
    <location>
        <begin position="256"/>
        <end position="260"/>
    </location>
</feature>
<feature type="splice variant" id="VSP_041793" description="In isoform 2." evidence="6">
    <original>GLGITVFGI</original>
    <variation>VSPSFIWSY</variation>
    <location>
        <begin position="216"/>
        <end position="224"/>
    </location>
</feature>
<feature type="splice variant" id="VSP_041794" description="In isoform 2." evidence="6">
    <location>
        <begin position="225"/>
        <end position="310"/>
    </location>
</feature>
<evidence type="ECO:0000255" key="1"/>
<evidence type="ECO:0000269" key="2">
    <source>
    </source>
</evidence>
<evidence type="ECO:0000269" key="3">
    <source>
    </source>
</evidence>
<evidence type="ECO:0000269" key="4">
    <source>
    </source>
</evidence>
<evidence type="ECO:0000269" key="5">
    <source>
    </source>
</evidence>
<evidence type="ECO:0000305" key="6"/>
<evidence type="ECO:0000305" key="7">
    <source>
    </source>
</evidence>
<evidence type="ECO:0000305" key="8">
    <source>
    </source>
</evidence>
<evidence type="ECO:0000305" key="9">
    <source>
    </source>
</evidence>
<protein>
    <recommendedName>
        <fullName>Beta-carotene 3-hydroxylase 1, chloroplastic</fullName>
        <shortName>AtB1</shortName>
        <ecNumber evidence="5">1.14.15.24</ecNumber>
    </recommendedName>
</protein>
<comment type="function">
    <text evidence="5 7 8 9">Nonheme diiron monooxygenase involved in the biosynthesis of xanthophylls. Specific for beta-ring hydroxylations of beta-carotene. Also has a low activity toward the beta- and epsilon-rings of alpha-carotene. No activity with acyclic carotenoids such as lycopene and neurosporene. Uses ferredoxin as an electron donor.</text>
</comment>
<comment type="catalytic activity">
    <reaction evidence="5">
        <text>all-trans-beta-carotene + 4 reduced [2Fe-2S]-[ferredoxin] + 2 O2 + 4 H(+) = all-trans-zeaxanthin + 4 oxidized [2Fe-2S]-[ferredoxin] + 2 H2O</text>
        <dbReference type="Rhea" id="RHEA:30331"/>
        <dbReference type="Rhea" id="RHEA-COMP:10000"/>
        <dbReference type="Rhea" id="RHEA-COMP:10001"/>
        <dbReference type="ChEBI" id="CHEBI:15377"/>
        <dbReference type="ChEBI" id="CHEBI:15378"/>
        <dbReference type="ChEBI" id="CHEBI:15379"/>
        <dbReference type="ChEBI" id="CHEBI:17579"/>
        <dbReference type="ChEBI" id="CHEBI:27547"/>
        <dbReference type="ChEBI" id="CHEBI:33737"/>
        <dbReference type="ChEBI" id="CHEBI:33738"/>
        <dbReference type="EC" id="1.14.15.24"/>
    </reaction>
</comment>
<comment type="subunit">
    <text evidence="6">Homodimer.</text>
</comment>
<comment type="subcellular location">
    <subcellularLocation>
        <location evidence="6">Plastid</location>
        <location evidence="6">Chloroplast membrane</location>
        <topology evidence="6">Multi-pass membrane protein</topology>
    </subcellularLocation>
</comment>
<comment type="alternative products">
    <event type="alternative splicing"/>
    <isoform>
        <id>Q9SZZ8-1</id>
        <name>1</name>
        <sequence type="displayed"/>
    </isoform>
    <isoform>
        <id>Q9SZZ8-2</id>
        <name>2</name>
        <sequence type="described" ref="VSP_041793 VSP_041794"/>
    </isoform>
</comment>
<comment type="tissue specificity">
    <text evidence="2">Expressed in leaves, flowers, stems, roots and siliques.</text>
</comment>
<comment type="domain">
    <text>The histidine box domains may contain the active site and/or be involved in iron binding.</text>
</comment>
<comment type="domain">
    <text>The N-terminal part of the mature protein (70-129) is probably involved in the formation of a functional homodimer.</text>
</comment>
<comment type="disruption phenotype">
    <text evidence="3 4">No visible phenotype when grown under normal light conditions; due to redundancy with BCH2. Bch1 and bch2 double mutant has no visible phenotype but lower levels of beta, beta-xanthophylls and increased beta-carotene and lutein. Cyp97c1, bch1 and bch2 triple mutant is paler and smaller than wild-type.</text>
</comment>
<comment type="miscellaneous">
    <text>A protein lacking the first 69 amino acids has a normal in vitro activity, while a protein lacking 129 N-terminal amino acids produces predominantly the monohydroxy intermediate beta-cryptoxanthin.</text>
</comment>
<comment type="similarity">
    <text evidence="6">Belongs to the sterol desaturase family.</text>
</comment>
<sequence length="310" mass="34361">MAAGLSTAVTFKPLHRSFSSSSTDFRLRLPKSLSGFSPSLRFKRFSVCYVVEERRQNSPIENDERPESTSSTNAIDAEYLALRLAEKLERKKSERSTYLIAAMLSSFGITSMAVMAVYYRFSWQMEGGEISMLEMFGTFALSVGAAVGMEFWARWAHRALWHASLWNMHESHHKPREGPFELNDVFAIVNAGPAIGLLSYGFFNKGLVPGLCFGAGLGITVFGIAYMFVHDGLVHKRFPVGPIADVPYLRKVAAAHQLHHTDKFNGVPYGLFLGPKELEEVGGNEELDKEISRRIKSYKKASGSGSSSSS</sequence>
<keyword id="KW-0025">Alternative splicing</keyword>
<keyword id="KW-0125">Carotenoid biosynthesis</keyword>
<keyword id="KW-0150">Chloroplast</keyword>
<keyword id="KW-0378">Hydrolase</keyword>
<keyword id="KW-0408">Iron</keyword>
<keyword id="KW-0472">Membrane</keyword>
<keyword id="KW-0479">Metal-binding</keyword>
<keyword id="KW-0520">NAD</keyword>
<keyword id="KW-0560">Oxidoreductase</keyword>
<keyword id="KW-0934">Plastid</keyword>
<keyword id="KW-1185">Reference proteome</keyword>
<keyword id="KW-0809">Transit peptide</keyword>
<keyword id="KW-0812">Transmembrane</keyword>
<keyword id="KW-1133">Transmembrane helix</keyword>
<proteinExistence type="evidence at protein level"/>
<accession>Q9SZZ8</accession>
<accession>F4JTC5</accession>
<accession>Q96297</accession>
<reference key="1">
    <citation type="submission" date="1999-02" db="EMBL/GenBank/DDBJ databases">
        <title>Gene structure and regulation of the carotenoid biosynthesis pathway in Arabidopsis thaliana.</title>
        <authorList>
            <person name="Giuliano G."/>
            <person name="Rosati C."/>
            <person name="Santangelo G."/>
            <person name="Nebuloso E."/>
        </authorList>
    </citation>
    <scope>NUCLEOTIDE SEQUENCE [GENOMIC DNA / MRNA] (ISOFORM 1)</scope>
</reference>
<reference key="2">
    <citation type="journal article" date="1999" name="Nature">
        <title>Sequence and analysis of chromosome 4 of the plant Arabidopsis thaliana.</title>
        <authorList>
            <person name="Mayer K.F.X."/>
            <person name="Schueller C."/>
            <person name="Wambutt R."/>
            <person name="Murphy G."/>
            <person name="Volckaert G."/>
            <person name="Pohl T."/>
            <person name="Duesterhoeft A."/>
            <person name="Stiekema W."/>
            <person name="Entian K.-D."/>
            <person name="Terryn N."/>
            <person name="Harris B."/>
            <person name="Ansorge W."/>
            <person name="Brandt P."/>
            <person name="Grivell L.A."/>
            <person name="Rieger M."/>
            <person name="Weichselgartner M."/>
            <person name="de Simone V."/>
            <person name="Obermaier B."/>
            <person name="Mache R."/>
            <person name="Mueller M."/>
            <person name="Kreis M."/>
            <person name="Delseny M."/>
            <person name="Puigdomenech P."/>
            <person name="Watson M."/>
            <person name="Schmidtheini T."/>
            <person name="Reichert B."/>
            <person name="Portetelle D."/>
            <person name="Perez-Alonso M."/>
            <person name="Boutry M."/>
            <person name="Bancroft I."/>
            <person name="Vos P."/>
            <person name="Hoheisel J."/>
            <person name="Zimmermann W."/>
            <person name="Wedler H."/>
            <person name="Ridley P."/>
            <person name="Langham S.-A."/>
            <person name="McCullagh B."/>
            <person name="Bilham L."/>
            <person name="Robben J."/>
            <person name="van der Schueren J."/>
            <person name="Grymonprez B."/>
            <person name="Chuang Y.-J."/>
            <person name="Vandenbussche F."/>
            <person name="Braeken M."/>
            <person name="Weltjens I."/>
            <person name="Voet M."/>
            <person name="Bastiaens I."/>
            <person name="Aert R."/>
            <person name="Defoor E."/>
            <person name="Weitzenegger T."/>
            <person name="Bothe G."/>
            <person name="Ramsperger U."/>
            <person name="Hilbert H."/>
            <person name="Braun M."/>
            <person name="Holzer E."/>
            <person name="Brandt A."/>
            <person name="Peters S."/>
            <person name="van Staveren M."/>
            <person name="Dirkse W."/>
            <person name="Mooijman P."/>
            <person name="Klein Lankhorst R."/>
            <person name="Rose M."/>
            <person name="Hauf J."/>
            <person name="Koetter P."/>
            <person name="Berneiser S."/>
            <person name="Hempel S."/>
            <person name="Feldpausch M."/>
            <person name="Lamberth S."/>
            <person name="Van den Daele H."/>
            <person name="De Keyser A."/>
            <person name="Buysshaert C."/>
            <person name="Gielen J."/>
            <person name="Villarroel R."/>
            <person name="De Clercq R."/>
            <person name="van Montagu M."/>
            <person name="Rogers J."/>
            <person name="Cronin A."/>
            <person name="Quail M.A."/>
            <person name="Bray-Allen S."/>
            <person name="Clark L."/>
            <person name="Doggett J."/>
            <person name="Hall S."/>
            <person name="Kay M."/>
            <person name="Lennard N."/>
            <person name="McLay K."/>
            <person name="Mayes R."/>
            <person name="Pettett A."/>
            <person name="Rajandream M.A."/>
            <person name="Lyne M."/>
            <person name="Benes V."/>
            <person name="Rechmann S."/>
            <person name="Borkova D."/>
            <person name="Bloecker H."/>
            <person name="Scharfe M."/>
            <person name="Grimm M."/>
            <person name="Loehnert T.-H."/>
            <person name="Dose S."/>
            <person name="de Haan M."/>
            <person name="Maarse A.C."/>
            <person name="Schaefer M."/>
            <person name="Mueller-Auer S."/>
            <person name="Gabel C."/>
            <person name="Fuchs M."/>
            <person name="Fartmann B."/>
            <person name="Granderath K."/>
            <person name="Dauner D."/>
            <person name="Herzl A."/>
            <person name="Neumann S."/>
            <person name="Argiriou A."/>
            <person name="Vitale D."/>
            <person name="Liguori R."/>
            <person name="Piravandi E."/>
            <person name="Massenet O."/>
            <person name="Quigley F."/>
            <person name="Clabauld G."/>
            <person name="Muendlein A."/>
            <person name="Felber R."/>
            <person name="Schnabl S."/>
            <person name="Hiller R."/>
            <person name="Schmidt W."/>
            <person name="Lecharny A."/>
            <person name="Aubourg S."/>
            <person name="Chefdor F."/>
            <person name="Cooke R."/>
            <person name="Berger C."/>
            <person name="Monfort A."/>
            <person name="Casacuberta E."/>
            <person name="Gibbons T."/>
            <person name="Weber N."/>
            <person name="Vandenbol M."/>
            <person name="Bargues M."/>
            <person name="Terol J."/>
            <person name="Torres A."/>
            <person name="Perez-Perez A."/>
            <person name="Purnelle B."/>
            <person name="Bent E."/>
            <person name="Johnson S."/>
            <person name="Tacon D."/>
            <person name="Jesse T."/>
            <person name="Heijnen L."/>
            <person name="Schwarz S."/>
            <person name="Scholler P."/>
            <person name="Heber S."/>
            <person name="Francs P."/>
            <person name="Bielke C."/>
            <person name="Frishman D."/>
            <person name="Haase D."/>
            <person name="Lemcke K."/>
            <person name="Mewes H.-W."/>
            <person name="Stocker S."/>
            <person name="Zaccaria P."/>
            <person name="Bevan M."/>
            <person name="Wilson R.K."/>
            <person name="de la Bastide M."/>
            <person name="Habermann K."/>
            <person name="Parnell L."/>
            <person name="Dedhia N."/>
            <person name="Gnoj L."/>
            <person name="Schutz K."/>
            <person name="Huang E."/>
            <person name="Spiegel L."/>
            <person name="Sekhon M."/>
            <person name="Murray J."/>
            <person name="Sheet P."/>
            <person name="Cordes M."/>
            <person name="Abu-Threideh J."/>
            <person name="Stoneking T."/>
            <person name="Kalicki J."/>
            <person name="Graves T."/>
            <person name="Harmon G."/>
            <person name="Edwards J."/>
            <person name="Latreille P."/>
            <person name="Courtney L."/>
            <person name="Cloud J."/>
            <person name="Abbott A."/>
            <person name="Scott K."/>
            <person name="Johnson D."/>
            <person name="Minx P."/>
            <person name="Bentley D."/>
            <person name="Fulton B."/>
            <person name="Miller N."/>
            <person name="Greco T."/>
            <person name="Kemp K."/>
            <person name="Kramer J."/>
            <person name="Fulton L."/>
            <person name="Mardis E."/>
            <person name="Dante M."/>
            <person name="Pepin K."/>
            <person name="Hillier L.W."/>
            <person name="Nelson J."/>
            <person name="Spieth J."/>
            <person name="Ryan E."/>
            <person name="Andrews S."/>
            <person name="Geisel C."/>
            <person name="Layman D."/>
            <person name="Du H."/>
            <person name="Ali J."/>
            <person name="Berghoff A."/>
            <person name="Jones K."/>
            <person name="Drone K."/>
            <person name="Cotton M."/>
            <person name="Joshu C."/>
            <person name="Antonoiu B."/>
            <person name="Zidanic M."/>
            <person name="Strong C."/>
            <person name="Sun H."/>
            <person name="Lamar B."/>
            <person name="Yordan C."/>
            <person name="Ma P."/>
            <person name="Zhong J."/>
            <person name="Preston R."/>
            <person name="Vil D."/>
            <person name="Shekher M."/>
            <person name="Matero A."/>
            <person name="Shah R."/>
            <person name="Swaby I.K."/>
            <person name="O'Shaughnessy A."/>
            <person name="Rodriguez M."/>
            <person name="Hoffman J."/>
            <person name="Till S."/>
            <person name="Granat S."/>
            <person name="Shohdy N."/>
            <person name="Hasegawa A."/>
            <person name="Hameed A."/>
            <person name="Lodhi M."/>
            <person name="Johnson A."/>
            <person name="Chen E."/>
            <person name="Marra M.A."/>
            <person name="Martienssen R."/>
            <person name="McCombie W.R."/>
        </authorList>
    </citation>
    <scope>NUCLEOTIDE SEQUENCE [LARGE SCALE GENOMIC DNA]</scope>
    <source>
        <strain>cv. Columbia</strain>
    </source>
</reference>
<reference key="3">
    <citation type="journal article" date="2017" name="Plant J.">
        <title>Araport11: a complete reannotation of the Arabidopsis thaliana reference genome.</title>
        <authorList>
            <person name="Cheng C.Y."/>
            <person name="Krishnakumar V."/>
            <person name="Chan A.P."/>
            <person name="Thibaud-Nissen F."/>
            <person name="Schobel S."/>
            <person name="Town C.D."/>
        </authorList>
    </citation>
    <scope>GENOME REANNOTATION</scope>
    <source>
        <strain>cv. Columbia</strain>
    </source>
</reference>
<reference key="4">
    <citation type="journal article" date="2003" name="Science">
        <title>Empirical analysis of transcriptional activity in the Arabidopsis genome.</title>
        <authorList>
            <person name="Yamada K."/>
            <person name="Lim J."/>
            <person name="Dale J.M."/>
            <person name="Chen H."/>
            <person name="Shinn P."/>
            <person name="Palm C.J."/>
            <person name="Southwick A.M."/>
            <person name="Wu H.C."/>
            <person name="Kim C.J."/>
            <person name="Nguyen M."/>
            <person name="Pham P.K."/>
            <person name="Cheuk R.F."/>
            <person name="Karlin-Newmann G."/>
            <person name="Liu S.X."/>
            <person name="Lam B."/>
            <person name="Sakano H."/>
            <person name="Wu T."/>
            <person name="Yu G."/>
            <person name="Miranda M."/>
            <person name="Quach H.L."/>
            <person name="Tripp M."/>
            <person name="Chang C.H."/>
            <person name="Lee J.M."/>
            <person name="Toriumi M.J."/>
            <person name="Chan M.M."/>
            <person name="Tang C.C."/>
            <person name="Onodera C.S."/>
            <person name="Deng J.M."/>
            <person name="Akiyama K."/>
            <person name="Ansari Y."/>
            <person name="Arakawa T."/>
            <person name="Banh J."/>
            <person name="Banno F."/>
            <person name="Bowser L."/>
            <person name="Brooks S.Y."/>
            <person name="Carninci P."/>
            <person name="Chao Q."/>
            <person name="Choy N."/>
            <person name="Enju A."/>
            <person name="Goldsmith A.D."/>
            <person name="Gurjal M."/>
            <person name="Hansen N.F."/>
            <person name="Hayashizaki Y."/>
            <person name="Johnson-Hopson C."/>
            <person name="Hsuan V.W."/>
            <person name="Iida K."/>
            <person name="Karnes M."/>
            <person name="Khan S."/>
            <person name="Koesema E."/>
            <person name="Ishida J."/>
            <person name="Jiang P.X."/>
            <person name="Jones T."/>
            <person name="Kawai J."/>
            <person name="Kamiya A."/>
            <person name="Meyers C."/>
            <person name="Nakajima M."/>
            <person name="Narusaka M."/>
            <person name="Seki M."/>
            <person name="Sakurai T."/>
            <person name="Satou M."/>
            <person name="Tamse R."/>
            <person name="Vaysberg M."/>
            <person name="Wallender E.K."/>
            <person name="Wong C."/>
            <person name="Yamamura Y."/>
            <person name="Yuan S."/>
            <person name="Shinozaki K."/>
            <person name="Davis R.W."/>
            <person name="Theologis A."/>
            <person name="Ecker J.R."/>
        </authorList>
    </citation>
    <scope>NUCLEOTIDE SEQUENCE [LARGE SCALE MRNA] (ISOFORM 1)</scope>
    <source>
        <strain>cv. Columbia</strain>
    </source>
</reference>
<reference key="5">
    <citation type="journal article" date="1996" name="J. Biol. Chem.">
        <title>Cloning and functional analysis of the beta-carotene hydroxylase of Arabidopsis thaliana.</title>
        <authorList>
            <person name="Sun Z."/>
            <person name="Gantt E."/>
            <person name="Cunningham F.X. Jr."/>
        </authorList>
    </citation>
    <scope>NUCLEOTIDE SEQUENCE [MRNA] OF 17-310 (ISOFORM 1)</scope>
    <scope>FUNCTION</scope>
    <scope>CATALYTIC ACTIVITY</scope>
    <source>
        <strain>cv. Columbia</strain>
    </source>
</reference>
<reference key="6">
    <citation type="journal article" date="2001" name="Plant Mol. Biol.">
        <title>Characterization of a second carotenoid beta-hydroxylase gene from Arabidopsis and its relationship to the LUT1 locus.</title>
        <authorList>
            <person name="Tian L."/>
            <person name="DellaPenna D."/>
        </authorList>
    </citation>
    <scope>TISSUE SPECIFICITY</scope>
</reference>
<reference key="7">
    <citation type="journal article" date="2003" name="Plant Cell">
        <title>Functional analysis of beta- and epsilon-ring carotenoid hydroxylases in Arabidopsis.</title>
        <authorList>
            <person name="Tian L."/>
            <person name="Magallanes-Lundback M."/>
            <person name="Musetti V."/>
            <person name="DellaPenna D."/>
        </authorList>
    </citation>
    <scope>FUNCTION</scope>
    <scope>DISRUPTION PHENOTYPE</scope>
</reference>
<reference key="8">
    <citation type="journal article" date="2006" name="FEBS Lett.">
        <title>Elucidation of the beta-carotene hydroxylation pathway in Arabidopsis thaliana.</title>
        <authorList>
            <person name="Fiore A."/>
            <person name="Dall'osto L."/>
            <person name="Fraser P.D."/>
            <person name="Bassi R."/>
            <person name="Giuliano G."/>
        </authorList>
    </citation>
    <scope>FUNCTION</scope>
    <scope>DISRUPTION PHENOTYPE</scope>
</reference>
<reference key="9">
    <citation type="journal article" date="2009" name="Plant Cell Physiol.">
        <title>The evolution and function of carotenoid hydroxylases in Arabidopsis.</title>
        <authorList>
            <person name="Kim J."/>
            <person name="Smith J.J."/>
            <person name="Tian L."/>
            <person name="Dellapenna D."/>
        </authorList>
    </citation>
    <scope>FUNCTION</scope>
</reference>
<dbReference type="EC" id="1.14.15.24" evidence="5"/>
<dbReference type="EMBL" id="AF125576">
    <property type="protein sequence ID" value="AAF85797.1"/>
    <property type="molecule type" value="mRNA"/>
</dbReference>
<dbReference type="EMBL" id="AF125577">
    <property type="protein sequence ID" value="AAF85798.1"/>
    <property type="molecule type" value="Genomic_DNA"/>
</dbReference>
<dbReference type="EMBL" id="AL050400">
    <property type="protein sequence ID" value="CAB43701.1"/>
    <property type="molecule type" value="Genomic_DNA"/>
</dbReference>
<dbReference type="EMBL" id="AL161563">
    <property type="protein sequence ID" value="CAB81380.1"/>
    <property type="molecule type" value="Genomic_DNA"/>
</dbReference>
<dbReference type="EMBL" id="CP002687">
    <property type="protein sequence ID" value="AEE85098.1"/>
    <property type="molecule type" value="Genomic_DNA"/>
</dbReference>
<dbReference type="EMBL" id="CP002687">
    <property type="protein sequence ID" value="AEE85099.1"/>
    <property type="molecule type" value="Genomic_DNA"/>
</dbReference>
<dbReference type="EMBL" id="CP002687">
    <property type="protein sequence ID" value="ANM67497.1"/>
    <property type="molecule type" value="Genomic_DNA"/>
</dbReference>
<dbReference type="EMBL" id="AF370220">
    <property type="protein sequence ID" value="AAK44035.1"/>
    <property type="molecule type" value="mRNA"/>
</dbReference>
<dbReference type="EMBL" id="AY113923">
    <property type="protein sequence ID" value="AAM44971.1"/>
    <property type="molecule type" value="mRNA"/>
</dbReference>
<dbReference type="EMBL" id="U58919">
    <property type="protein sequence ID" value="AAC49443.1"/>
    <property type="molecule type" value="mRNA"/>
</dbReference>
<dbReference type="PIR" id="T09562">
    <property type="entry name" value="T09562"/>
</dbReference>
<dbReference type="RefSeq" id="NP_001031715.1">
    <molecule id="Q9SZZ8-2"/>
    <property type="nucleotide sequence ID" value="NM_001036638.3"/>
</dbReference>
<dbReference type="RefSeq" id="NP_001320065.1">
    <molecule id="Q9SZZ8-2"/>
    <property type="nucleotide sequence ID" value="NM_001341759.1"/>
</dbReference>
<dbReference type="RefSeq" id="NP_194300.1">
    <molecule id="Q9SZZ8-1"/>
    <property type="nucleotide sequence ID" value="NM_118702.4"/>
</dbReference>
<dbReference type="FunCoup" id="Q9SZZ8">
    <property type="interactions" value="229"/>
</dbReference>
<dbReference type="STRING" id="3702.Q9SZZ8"/>
<dbReference type="PaxDb" id="3702-AT4G25700.1"/>
<dbReference type="ProteomicsDB" id="240645">
    <molecule id="Q9SZZ8-1"/>
</dbReference>
<dbReference type="EnsemblPlants" id="AT4G25700.1">
    <molecule id="Q9SZZ8-1"/>
    <property type="protein sequence ID" value="AT4G25700.1"/>
    <property type="gene ID" value="AT4G25700"/>
</dbReference>
<dbReference type="EnsemblPlants" id="AT4G25700.2">
    <molecule id="Q9SZZ8-2"/>
    <property type="protein sequence ID" value="AT4G25700.2"/>
    <property type="gene ID" value="AT4G25700"/>
</dbReference>
<dbReference type="EnsemblPlants" id="AT4G25700.3">
    <molecule id="Q9SZZ8-2"/>
    <property type="protein sequence ID" value="AT4G25700.3"/>
    <property type="gene ID" value="AT4G25700"/>
</dbReference>
<dbReference type="GeneID" id="828675"/>
<dbReference type="Gramene" id="AT4G25700.1">
    <molecule id="Q9SZZ8-1"/>
    <property type="protein sequence ID" value="AT4G25700.1"/>
    <property type="gene ID" value="AT4G25700"/>
</dbReference>
<dbReference type="Gramene" id="AT4G25700.2">
    <molecule id="Q9SZZ8-2"/>
    <property type="protein sequence ID" value="AT4G25700.2"/>
    <property type="gene ID" value="AT4G25700"/>
</dbReference>
<dbReference type="Gramene" id="AT4G25700.3">
    <molecule id="Q9SZZ8-2"/>
    <property type="protein sequence ID" value="AT4G25700.3"/>
    <property type="gene ID" value="AT4G25700"/>
</dbReference>
<dbReference type="KEGG" id="ath:AT4G25700"/>
<dbReference type="Araport" id="AT4G25700"/>
<dbReference type="TAIR" id="AT4G25700">
    <property type="gene designation" value="BETA-OHASE 1"/>
</dbReference>
<dbReference type="eggNOG" id="ENOG502QSIR">
    <property type="taxonomic scope" value="Eukaryota"/>
</dbReference>
<dbReference type="HOGENOM" id="CLU_054855_0_1_1"/>
<dbReference type="InParanoid" id="Q9SZZ8"/>
<dbReference type="OMA" id="TIYFRHS"/>
<dbReference type="PhylomeDB" id="Q9SZZ8"/>
<dbReference type="BioCyc" id="ARA:AT4G25700-MONOMER"/>
<dbReference type="BioCyc" id="MetaCyc:AT4G25700-MONOMER"/>
<dbReference type="BRENDA" id="1.14.15.24">
    <property type="organism ID" value="399"/>
</dbReference>
<dbReference type="PRO" id="PR:Q9SZZ8"/>
<dbReference type="Proteomes" id="UP000006548">
    <property type="component" value="Chromosome 4"/>
</dbReference>
<dbReference type="ExpressionAtlas" id="Q9SZZ8">
    <property type="expression patterns" value="baseline and differential"/>
</dbReference>
<dbReference type="GO" id="GO:0031969">
    <property type="term" value="C:chloroplast membrane"/>
    <property type="evidence" value="ECO:0007669"/>
    <property type="project" value="UniProtKB-SubCell"/>
</dbReference>
<dbReference type="GO" id="GO:0010291">
    <property type="term" value="F:beta-carotene 3-hydroxylase activity"/>
    <property type="evidence" value="ECO:0007669"/>
    <property type="project" value="UniProtKB-EC"/>
</dbReference>
<dbReference type="GO" id="GO:0016787">
    <property type="term" value="F:hydrolase activity"/>
    <property type="evidence" value="ECO:0007669"/>
    <property type="project" value="UniProtKB-KW"/>
</dbReference>
<dbReference type="GO" id="GO:0005506">
    <property type="term" value="F:iron ion binding"/>
    <property type="evidence" value="ECO:0007669"/>
    <property type="project" value="InterPro"/>
</dbReference>
<dbReference type="GO" id="GO:0016123">
    <property type="term" value="P:xanthophyll biosynthetic process"/>
    <property type="evidence" value="ECO:0000316"/>
    <property type="project" value="TAIR"/>
</dbReference>
<dbReference type="InterPro" id="IPR045019">
    <property type="entry name" value="BETA-OHASE-like"/>
</dbReference>
<dbReference type="InterPro" id="IPR006694">
    <property type="entry name" value="Fatty_acid_hydroxylase"/>
</dbReference>
<dbReference type="PANTHER" id="PTHR31899">
    <property type="entry name" value="BETA-CAROTENE 3-HYDROXYLASE 1, CHLOROPLASTIC"/>
    <property type="match status" value="1"/>
</dbReference>
<dbReference type="PANTHER" id="PTHR31899:SF9">
    <property type="entry name" value="BETA-CAROTENE 3-HYDROXYLASE 1, CHLOROPLASTIC"/>
    <property type="match status" value="1"/>
</dbReference>
<dbReference type="Pfam" id="PF04116">
    <property type="entry name" value="FA_hydroxylase"/>
    <property type="match status" value="1"/>
</dbReference>
<name>BCH1_ARATH</name>